<keyword id="KW-0963">Cytoplasm</keyword>
<keyword id="KW-0255">Endonuclease</keyword>
<keyword id="KW-0378">Hydrolase</keyword>
<keyword id="KW-0464">Manganese</keyword>
<keyword id="KW-0479">Metal-binding</keyword>
<keyword id="KW-0540">Nuclease</keyword>
<keyword id="KW-1185">Reference proteome</keyword>
<organism>
    <name type="scientific">Erythrobacter litoralis (strain HTCC2594)</name>
    <dbReference type="NCBI Taxonomy" id="314225"/>
    <lineage>
        <taxon>Bacteria</taxon>
        <taxon>Pseudomonadati</taxon>
        <taxon>Pseudomonadota</taxon>
        <taxon>Alphaproteobacteria</taxon>
        <taxon>Sphingomonadales</taxon>
        <taxon>Erythrobacteraceae</taxon>
        <taxon>Erythrobacter/Porphyrobacter group</taxon>
        <taxon>Erythrobacter</taxon>
    </lineage>
</organism>
<reference key="1">
    <citation type="journal article" date="2009" name="J. Bacteriol.">
        <title>Complete genome sequence of Erythrobacter litoralis HTCC2594.</title>
        <authorList>
            <person name="Oh H.M."/>
            <person name="Giovannoni S.J."/>
            <person name="Ferriera S."/>
            <person name="Johnson J."/>
            <person name="Cho J.C."/>
        </authorList>
    </citation>
    <scope>NUCLEOTIDE SEQUENCE [LARGE SCALE GENOMIC DNA]</scope>
    <source>
        <strain>HTCC2594</strain>
    </source>
</reference>
<dbReference type="EC" id="3.1.26.4" evidence="1"/>
<dbReference type="EMBL" id="CP000157">
    <property type="protein sequence ID" value="ABC62546.1"/>
    <property type="molecule type" value="Genomic_DNA"/>
</dbReference>
<dbReference type="RefSeq" id="WP_011413422.1">
    <property type="nucleotide sequence ID" value="NC_007722.1"/>
</dbReference>
<dbReference type="SMR" id="Q2NCP5"/>
<dbReference type="STRING" id="314225.ELI_02270"/>
<dbReference type="KEGG" id="eli:ELI_02270"/>
<dbReference type="eggNOG" id="COG0164">
    <property type="taxonomic scope" value="Bacteria"/>
</dbReference>
<dbReference type="HOGENOM" id="CLU_036532_3_2_5"/>
<dbReference type="OrthoDB" id="9803420at2"/>
<dbReference type="Proteomes" id="UP000008808">
    <property type="component" value="Chromosome"/>
</dbReference>
<dbReference type="GO" id="GO:0005737">
    <property type="term" value="C:cytoplasm"/>
    <property type="evidence" value="ECO:0007669"/>
    <property type="project" value="UniProtKB-SubCell"/>
</dbReference>
<dbReference type="GO" id="GO:0032299">
    <property type="term" value="C:ribonuclease H2 complex"/>
    <property type="evidence" value="ECO:0007669"/>
    <property type="project" value="TreeGrafter"/>
</dbReference>
<dbReference type="GO" id="GO:0030145">
    <property type="term" value="F:manganese ion binding"/>
    <property type="evidence" value="ECO:0007669"/>
    <property type="project" value="UniProtKB-UniRule"/>
</dbReference>
<dbReference type="GO" id="GO:0003723">
    <property type="term" value="F:RNA binding"/>
    <property type="evidence" value="ECO:0007669"/>
    <property type="project" value="InterPro"/>
</dbReference>
<dbReference type="GO" id="GO:0004523">
    <property type="term" value="F:RNA-DNA hybrid ribonuclease activity"/>
    <property type="evidence" value="ECO:0007669"/>
    <property type="project" value="UniProtKB-UniRule"/>
</dbReference>
<dbReference type="GO" id="GO:0043137">
    <property type="term" value="P:DNA replication, removal of RNA primer"/>
    <property type="evidence" value="ECO:0007669"/>
    <property type="project" value="TreeGrafter"/>
</dbReference>
<dbReference type="GO" id="GO:0006298">
    <property type="term" value="P:mismatch repair"/>
    <property type="evidence" value="ECO:0007669"/>
    <property type="project" value="TreeGrafter"/>
</dbReference>
<dbReference type="CDD" id="cd07182">
    <property type="entry name" value="RNase_HII_bacteria_HII_like"/>
    <property type="match status" value="1"/>
</dbReference>
<dbReference type="Gene3D" id="3.30.420.10">
    <property type="entry name" value="Ribonuclease H-like superfamily/Ribonuclease H"/>
    <property type="match status" value="1"/>
</dbReference>
<dbReference type="HAMAP" id="MF_00052_B">
    <property type="entry name" value="RNase_HII_B"/>
    <property type="match status" value="1"/>
</dbReference>
<dbReference type="InterPro" id="IPR022898">
    <property type="entry name" value="RNase_HII"/>
</dbReference>
<dbReference type="InterPro" id="IPR001352">
    <property type="entry name" value="RNase_HII/HIII"/>
</dbReference>
<dbReference type="InterPro" id="IPR024567">
    <property type="entry name" value="RNase_HII/HIII_dom"/>
</dbReference>
<dbReference type="InterPro" id="IPR012337">
    <property type="entry name" value="RNaseH-like_sf"/>
</dbReference>
<dbReference type="InterPro" id="IPR036397">
    <property type="entry name" value="RNaseH_sf"/>
</dbReference>
<dbReference type="NCBIfam" id="NF000595">
    <property type="entry name" value="PRK00015.1-3"/>
    <property type="match status" value="1"/>
</dbReference>
<dbReference type="PANTHER" id="PTHR10954">
    <property type="entry name" value="RIBONUCLEASE H2 SUBUNIT A"/>
    <property type="match status" value="1"/>
</dbReference>
<dbReference type="PANTHER" id="PTHR10954:SF18">
    <property type="entry name" value="RIBONUCLEASE HII"/>
    <property type="match status" value="1"/>
</dbReference>
<dbReference type="Pfam" id="PF01351">
    <property type="entry name" value="RNase_HII"/>
    <property type="match status" value="1"/>
</dbReference>
<dbReference type="SUPFAM" id="SSF53098">
    <property type="entry name" value="Ribonuclease H-like"/>
    <property type="match status" value="1"/>
</dbReference>
<dbReference type="PROSITE" id="PS51975">
    <property type="entry name" value="RNASE_H_2"/>
    <property type="match status" value="1"/>
</dbReference>
<accession>Q2NCP5</accession>
<protein>
    <recommendedName>
        <fullName evidence="1">Ribonuclease HII</fullName>
        <shortName evidence="1">RNase HII</shortName>
        <ecNumber evidence="1">3.1.26.4</ecNumber>
    </recommendedName>
</protein>
<feature type="chain" id="PRO_0000334895" description="Ribonuclease HII">
    <location>
        <begin position="1"/>
        <end position="212"/>
    </location>
</feature>
<feature type="domain" description="RNase H type-2" evidence="2">
    <location>
        <begin position="18"/>
        <end position="212"/>
    </location>
</feature>
<feature type="binding site" evidence="1">
    <location>
        <position position="24"/>
    </location>
    <ligand>
        <name>a divalent metal cation</name>
        <dbReference type="ChEBI" id="CHEBI:60240"/>
    </ligand>
</feature>
<feature type="binding site" evidence="1">
    <location>
        <position position="25"/>
    </location>
    <ligand>
        <name>a divalent metal cation</name>
        <dbReference type="ChEBI" id="CHEBI:60240"/>
    </ligand>
</feature>
<feature type="binding site" evidence="1">
    <location>
        <position position="118"/>
    </location>
    <ligand>
        <name>a divalent metal cation</name>
        <dbReference type="ChEBI" id="CHEBI:60240"/>
    </ligand>
</feature>
<evidence type="ECO:0000255" key="1">
    <source>
        <dbReference type="HAMAP-Rule" id="MF_00052"/>
    </source>
</evidence>
<evidence type="ECO:0000255" key="2">
    <source>
        <dbReference type="PROSITE-ProRule" id="PRU01319"/>
    </source>
</evidence>
<proteinExistence type="inferred from homology"/>
<name>RNH2_ERYLH</name>
<gene>
    <name evidence="1" type="primary">rnhB</name>
    <name type="ordered locus">ELI_02270</name>
</gene>
<comment type="function">
    <text evidence="1">Endonuclease that specifically degrades the RNA of RNA-DNA hybrids.</text>
</comment>
<comment type="catalytic activity">
    <reaction evidence="1">
        <text>Endonucleolytic cleavage to 5'-phosphomonoester.</text>
        <dbReference type="EC" id="3.1.26.4"/>
    </reaction>
</comment>
<comment type="cofactor">
    <cofactor evidence="1">
        <name>Mn(2+)</name>
        <dbReference type="ChEBI" id="CHEBI:29035"/>
    </cofactor>
    <cofactor evidence="1">
        <name>Mg(2+)</name>
        <dbReference type="ChEBI" id="CHEBI:18420"/>
    </cofactor>
    <text evidence="1">Manganese or magnesium. Binds 1 divalent metal ion per monomer in the absence of substrate. May bind a second metal ion after substrate binding.</text>
</comment>
<comment type="subcellular location">
    <subcellularLocation>
        <location evidence="1">Cytoplasm</location>
    </subcellularLocation>
</comment>
<comment type="similarity">
    <text evidence="1">Belongs to the RNase HII family.</text>
</comment>
<sequence>MVSETPEDAIVSRPEAQGCVFGVDEAGRGPLAGPVVAAAVVLGDAYPKGLDDSKKLTAKRRAVLDEDIRKTCGWGVGVVDVEEIDTLNILGATMRAMSLAVQGLAAKLGGDPDMVLIDGNLTPHGRCDLWQWEAQAIIGGDGIEPAISAASIVAKEWRDRIMTEAAQDYPEYGWLSNKGYGTAQHLEALRLHGPTPLHRRSFAPVAQQELFR</sequence>